<evidence type="ECO:0000255" key="1">
    <source>
        <dbReference type="HAMAP-Rule" id="MF_00340"/>
    </source>
</evidence>
<evidence type="ECO:0000256" key="2">
    <source>
        <dbReference type="SAM" id="MobiDB-lite"/>
    </source>
</evidence>
<evidence type="ECO:0000305" key="3"/>
<sequence>MAVQQNKKSPSKRGMHRSHDFLTAAPLAVEPSTGEVHLRHHVSPNGYYRGKKVVKTKND</sequence>
<comment type="similarity">
    <text evidence="1">Belongs to the bacterial ribosomal protein bL32 family.</text>
</comment>
<dbReference type="EMBL" id="CP000378">
    <property type="protein sequence ID" value="ABF75549.1"/>
    <property type="molecule type" value="Genomic_DNA"/>
</dbReference>
<dbReference type="SMR" id="Q1BXV6"/>
<dbReference type="HOGENOM" id="CLU_129084_2_1_4"/>
<dbReference type="GO" id="GO:0015934">
    <property type="term" value="C:large ribosomal subunit"/>
    <property type="evidence" value="ECO:0007669"/>
    <property type="project" value="InterPro"/>
</dbReference>
<dbReference type="GO" id="GO:0003735">
    <property type="term" value="F:structural constituent of ribosome"/>
    <property type="evidence" value="ECO:0007669"/>
    <property type="project" value="InterPro"/>
</dbReference>
<dbReference type="GO" id="GO:0006412">
    <property type="term" value="P:translation"/>
    <property type="evidence" value="ECO:0007669"/>
    <property type="project" value="UniProtKB-UniRule"/>
</dbReference>
<dbReference type="HAMAP" id="MF_00340">
    <property type="entry name" value="Ribosomal_bL32"/>
    <property type="match status" value="1"/>
</dbReference>
<dbReference type="InterPro" id="IPR002677">
    <property type="entry name" value="Ribosomal_bL32"/>
</dbReference>
<dbReference type="InterPro" id="IPR044957">
    <property type="entry name" value="Ribosomal_bL32_bact"/>
</dbReference>
<dbReference type="InterPro" id="IPR011332">
    <property type="entry name" value="Ribosomal_zn-bd"/>
</dbReference>
<dbReference type="NCBIfam" id="TIGR01031">
    <property type="entry name" value="rpmF_bact"/>
    <property type="match status" value="1"/>
</dbReference>
<dbReference type="PANTHER" id="PTHR35534">
    <property type="entry name" value="50S RIBOSOMAL PROTEIN L32"/>
    <property type="match status" value="1"/>
</dbReference>
<dbReference type="PANTHER" id="PTHR35534:SF1">
    <property type="entry name" value="LARGE RIBOSOMAL SUBUNIT PROTEIN BL32"/>
    <property type="match status" value="1"/>
</dbReference>
<dbReference type="Pfam" id="PF01783">
    <property type="entry name" value="Ribosomal_L32p"/>
    <property type="match status" value="1"/>
</dbReference>
<dbReference type="SUPFAM" id="SSF57829">
    <property type="entry name" value="Zn-binding ribosomal proteins"/>
    <property type="match status" value="1"/>
</dbReference>
<gene>
    <name evidence="1" type="primary">rpmF</name>
    <name type="ordered locus">Bcen_0639</name>
</gene>
<proteinExistence type="inferred from homology"/>
<organism>
    <name type="scientific">Burkholderia orbicola (strain AU 1054)</name>
    <dbReference type="NCBI Taxonomy" id="331271"/>
    <lineage>
        <taxon>Bacteria</taxon>
        <taxon>Pseudomonadati</taxon>
        <taxon>Pseudomonadota</taxon>
        <taxon>Betaproteobacteria</taxon>
        <taxon>Burkholderiales</taxon>
        <taxon>Burkholderiaceae</taxon>
        <taxon>Burkholderia</taxon>
        <taxon>Burkholderia cepacia complex</taxon>
        <taxon>Burkholderia orbicola</taxon>
    </lineage>
</organism>
<protein>
    <recommendedName>
        <fullName evidence="1">Large ribosomal subunit protein bL32</fullName>
    </recommendedName>
    <alternativeName>
        <fullName evidence="3">50S ribosomal protein L32</fullName>
    </alternativeName>
</protein>
<feature type="chain" id="PRO_0000296435" description="Large ribosomal subunit protein bL32">
    <location>
        <begin position="1"/>
        <end position="59"/>
    </location>
</feature>
<feature type="region of interest" description="Disordered" evidence="2">
    <location>
        <begin position="1"/>
        <end position="23"/>
    </location>
</feature>
<feature type="region of interest" description="Disordered" evidence="2">
    <location>
        <begin position="35"/>
        <end position="59"/>
    </location>
</feature>
<feature type="compositionally biased region" description="Basic residues" evidence="2">
    <location>
        <begin position="49"/>
        <end position="59"/>
    </location>
</feature>
<name>RL32_BURO1</name>
<accession>Q1BXV6</accession>
<keyword id="KW-0687">Ribonucleoprotein</keyword>
<keyword id="KW-0689">Ribosomal protein</keyword>
<reference key="1">
    <citation type="submission" date="2006-05" db="EMBL/GenBank/DDBJ databases">
        <title>Complete sequence of chromosome 1 of Burkholderia cenocepacia AU 1054.</title>
        <authorList>
            <consortium name="US DOE Joint Genome Institute"/>
            <person name="Copeland A."/>
            <person name="Lucas S."/>
            <person name="Lapidus A."/>
            <person name="Barry K."/>
            <person name="Detter J.C."/>
            <person name="Glavina del Rio T."/>
            <person name="Hammon N."/>
            <person name="Israni S."/>
            <person name="Dalin E."/>
            <person name="Tice H."/>
            <person name="Pitluck S."/>
            <person name="Chain P."/>
            <person name="Malfatti S."/>
            <person name="Shin M."/>
            <person name="Vergez L."/>
            <person name="Schmutz J."/>
            <person name="Larimer F."/>
            <person name="Land M."/>
            <person name="Hauser L."/>
            <person name="Kyrpides N."/>
            <person name="Lykidis A."/>
            <person name="LiPuma J.J."/>
            <person name="Konstantinidis K."/>
            <person name="Tiedje J.M."/>
            <person name="Richardson P."/>
        </authorList>
    </citation>
    <scope>NUCLEOTIDE SEQUENCE [LARGE SCALE GENOMIC DNA]</scope>
    <source>
        <strain>AU 1054</strain>
    </source>
</reference>